<proteinExistence type="inferred from homology"/>
<reference key="1">
    <citation type="journal article" date="2002" name="Nature">
        <title>Genome sequence of the plant pathogen Ralstonia solanacearum.</title>
        <authorList>
            <person name="Salanoubat M."/>
            <person name="Genin S."/>
            <person name="Artiguenave F."/>
            <person name="Gouzy J."/>
            <person name="Mangenot S."/>
            <person name="Arlat M."/>
            <person name="Billault A."/>
            <person name="Brottier P."/>
            <person name="Camus J.-C."/>
            <person name="Cattolico L."/>
            <person name="Chandler M."/>
            <person name="Choisne N."/>
            <person name="Claudel-Renard C."/>
            <person name="Cunnac S."/>
            <person name="Demange N."/>
            <person name="Gaspin C."/>
            <person name="Lavie M."/>
            <person name="Moisan A."/>
            <person name="Robert C."/>
            <person name="Saurin W."/>
            <person name="Schiex T."/>
            <person name="Siguier P."/>
            <person name="Thebault P."/>
            <person name="Whalen M."/>
            <person name="Wincker P."/>
            <person name="Levy M."/>
            <person name="Weissenbach J."/>
            <person name="Boucher C.A."/>
        </authorList>
    </citation>
    <scope>NUCLEOTIDE SEQUENCE [LARGE SCALE GENOMIC DNA]</scope>
    <source>
        <strain>ATCC BAA-1114 / GMI1000</strain>
    </source>
</reference>
<comment type="function">
    <text evidence="1">Catalyzes the addition of meso-diaminopimelic acid to the nucleotide precursor UDP-N-acetylmuramoyl-L-alanyl-D-glutamate (UMAG) in the biosynthesis of bacterial cell-wall peptidoglycan.</text>
</comment>
<comment type="catalytic activity">
    <reaction evidence="1">
        <text>UDP-N-acetyl-alpha-D-muramoyl-L-alanyl-D-glutamate + meso-2,6-diaminopimelate + ATP = UDP-N-acetyl-alpha-D-muramoyl-L-alanyl-gamma-D-glutamyl-meso-2,6-diaminopimelate + ADP + phosphate + H(+)</text>
        <dbReference type="Rhea" id="RHEA:23676"/>
        <dbReference type="ChEBI" id="CHEBI:15378"/>
        <dbReference type="ChEBI" id="CHEBI:30616"/>
        <dbReference type="ChEBI" id="CHEBI:43474"/>
        <dbReference type="ChEBI" id="CHEBI:57791"/>
        <dbReference type="ChEBI" id="CHEBI:83900"/>
        <dbReference type="ChEBI" id="CHEBI:83905"/>
        <dbReference type="ChEBI" id="CHEBI:456216"/>
        <dbReference type="EC" id="6.3.2.13"/>
    </reaction>
</comment>
<comment type="cofactor">
    <cofactor evidence="1">
        <name>Mg(2+)</name>
        <dbReference type="ChEBI" id="CHEBI:18420"/>
    </cofactor>
</comment>
<comment type="pathway">
    <text evidence="1">Cell wall biogenesis; peptidoglycan biosynthesis.</text>
</comment>
<comment type="subcellular location">
    <subcellularLocation>
        <location evidence="1">Cytoplasm</location>
    </subcellularLocation>
</comment>
<comment type="PTM">
    <text evidence="1">Carboxylation is probably crucial for Mg(2+) binding and, consequently, for the gamma-phosphate positioning of ATP.</text>
</comment>
<comment type="similarity">
    <text evidence="1">Belongs to the MurCDEF family. MurE subfamily.</text>
</comment>
<name>MURE_RALN1</name>
<feature type="chain" id="PRO_0000101929" description="UDP-N-acetylmuramoyl-L-alanyl-D-glutamate--2,6-diaminopimelate ligase">
    <location>
        <begin position="1"/>
        <end position="514"/>
    </location>
</feature>
<feature type="short sequence motif" description="Meso-diaminopimelate recognition motif">
    <location>
        <begin position="430"/>
        <end position="433"/>
    </location>
</feature>
<feature type="binding site" evidence="1">
    <location>
        <position position="37"/>
    </location>
    <ligand>
        <name>UDP-N-acetyl-alpha-D-muramoyl-L-alanyl-D-glutamate</name>
        <dbReference type="ChEBI" id="CHEBI:83900"/>
    </ligand>
</feature>
<feature type="binding site" evidence="1">
    <location>
        <begin position="125"/>
        <end position="131"/>
    </location>
    <ligand>
        <name>ATP</name>
        <dbReference type="ChEBI" id="CHEBI:30616"/>
    </ligand>
</feature>
<feature type="binding site" evidence="1">
    <location>
        <begin position="167"/>
        <end position="168"/>
    </location>
    <ligand>
        <name>UDP-N-acetyl-alpha-D-muramoyl-L-alanyl-D-glutamate</name>
        <dbReference type="ChEBI" id="CHEBI:83900"/>
    </ligand>
</feature>
<feature type="binding site" evidence="1">
    <location>
        <position position="194"/>
    </location>
    <ligand>
        <name>UDP-N-acetyl-alpha-D-muramoyl-L-alanyl-D-glutamate</name>
        <dbReference type="ChEBI" id="CHEBI:83900"/>
    </ligand>
</feature>
<feature type="binding site" evidence="1">
    <location>
        <position position="200"/>
    </location>
    <ligand>
        <name>UDP-N-acetyl-alpha-D-muramoyl-L-alanyl-D-glutamate</name>
        <dbReference type="ChEBI" id="CHEBI:83900"/>
    </ligand>
</feature>
<feature type="binding site" evidence="1">
    <location>
        <position position="202"/>
    </location>
    <ligand>
        <name>UDP-N-acetyl-alpha-D-muramoyl-L-alanyl-D-glutamate</name>
        <dbReference type="ChEBI" id="CHEBI:83900"/>
    </ligand>
</feature>
<feature type="binding site" evidence="1">
    <location>
        <position position="406"/>
    </location>
    <ligand>
        <name>meso-2,6-diaminopimelate</name>
        <dbReference type="ChEBI" id="CHEBI:57791"/>
    </ligand>
</feature>
<feature type="binding site" evidence="1">
    <location>
        <begin position="430"/>
        <end position="433"/>
    </location>
    <ligand>
        <name>meso-2,6-diaminopimelate</name>
        <dbReference type="ChEBI" id="CHEBI:57791"/>
    </ligand>
</feature>
<feature type="binding site" evidence="1">
    <location>
        <position position="481"/>
    </location>
    <ligand>
        <name>meso-2,6-diaminopimelate</name>
        <dbReference type="ChEBI" id="CHEBI:57791"/>
    </ligand>
</feature>
<feature type="binding site" evidence="1">
    <location>
        <position position="485"/>
    </location>
    <ligand>
        <name>meso-2,6-diaminopimelate</name>
        <dbReference type="ChEBI" id="CHEBI:57791"/>
    </ligand>
</feature>
<feature type="modified residue" description="N6-carboxylysine" evidence="1">
    <location>
        <position position="234"/>
    </location>
</feature>
<dbReference type="EC" id="6.3.2.13" evidence="1"/>
<dbReference type="EMBL" id="AL646052">
    <property type="protein sequence ID" value="CAD16556.1"/>
    <property type="molecule type" value="Genomic_DNA"/>
</dbReference>
<dbReference type="RefSeq" id="WP_011002755.1">
    <property type="nucleotide sequence ID" value="NC_003295.1"/>
</dbReference>
<dbReference type="SMR" id="Q8XVI2"/>
<dbReference type="STRING" id="267608.RSc2849"/>
<dbReference type="EnsemblBacteria" id="CAD16556">
    <property type="protein sequence ID" value="CAD16556"/>
    <property type="gene ID" value="RSc2849"/>
</dbReference>
<dbReference type="KEGG" id="rso:RSc2849"/>
<dbReference type="eggNOG" id="COG0769">
    <property type="taxonomic scope" value="Bacteria"/>
</dbReference>
<dbReference type="HOGENOM" id="CLU_022291_3_2_4"/>
<dbReference type="UniPathway" id="UPA00219"/>
<dbReference type="Proteomes" id="UP000001436">
    <property type="component" value="Chromosome"/>
</dbReference>
<dbReference type="GO" id="GO:0005737">
    <property type="term" value="C:cytoplasm"/>
    <property type="evidence" value="ECO:0007669"/>
    <property type="project" value="UniProtKB-SubCell"/>
</dbReference>
<dbReference type="GO" id="GO:0005524">
    <property type="term" value="F:ATP binding"/>
    <property type="evidence" value="ECO:0007669"/>
    <property type="project" value="UniProtKB-UniRule"/>
</dbReference>
<dbReference type="GO" id="GO:0000287">
    <property type="term" value="F:magnesium ion binding"/>
    <property type="evidence" value="ECO:0007669"/>
    <property type="project" value="UniProtKB-UniRule"/>
</dbReference>
<dbReference type="GO" id="GO:0008765">
    <property type="term" value="F:UDP-N-acetylmuramoylalanyl-D-glutamate-2,6-diaminopimelate ligase activity"/>
    <property type="evidence" value="ECO:0007669"/>
    <property type="project" value="UniProtKB-UniRule"/>
</dbReference>
<dbReference type="GO" id="GO:0051301">
    <property type="term" value="P:cell division"/>
    <property type="evidence" value="ECO:0007669"/>
    <property type="project" value="UniProtKB-KW"/>
</dbReference>
<dbReference type="GO" id="GO:0071555">
    <property type="term" value="P:cell wall organization"/>
    <property type="evidence" value="ECO:0007669"/>
    <property type="project" value="UniProtKB-KW"/>
</dbReference>
<dbReference type="GO" id="GO:0009252">
    <property type="term" value="P:peptidoglycan biosynthetic process"/>
    <property type="evidence" value="ECO:0007669"/>
    <property type="project" value="UniProtKB-UniRule"/>
</dbReference>
<dbReference type="GO" id="GO:0008360">
    <property type="term" value="P:regulation of cell shape"/>
    <property type="evidence" value="ECO:0007669"/>
    <property type="project" value="UniProtKB-KW"/>
</dbReference>
<dbReference type="Gene3D" id="3.90.190.20">
    <property type="entry name" value="Mur ligase, C-terminal domain"/>
    <property type="match status" value="1"/>
</dbReference>
<dbReference type="Gene3D" id="3.40.1190.10">
    <property type="entry name" value="Mur-like, catalytic domain"/>
    <property type="match status" value="1"/>
</dbReference>
<dbReference type="Gene3D" id="3.40.1390.10">
    <property type="entry name" value="MurE/MurF, N-terminal domain"/>
    <property type="match status" value="1"/>
</dbReference>
<dbReference type="HAMAP" id="MF_00208">
    <property type="entry name" value="MurE"/>
    <property type="match status" value="1"/>
</dbReference>
<dbReference type="InterPro" id="IPR036565">
    <property type="entry name" value="Mur-like_cat_sf"/>
</dbReference>
<dbReference type="InterPro" id="IPR004101">
    <property type="entry name" value="Mur_ligase_C"/>
</dbReference>
<dbReference type="InterPro" id="IPR036615">
    <property type="entry name" value="Mur_ligase_C_dom_sf"/>
</dbReference>
<dbReference type="InterPro" id="IPR013221">
    <property type="entry name" value="Mur_ligase_cen"/>
</dbReference>
<dbReference type="InterPro" id="IPR035911">
    <property type="entry name" value="MurE/MurF_N"/>
</dbReference>
<dbReference type="InterPro" id="IPR005761">
    <property type="entry name" value="UDP-N-AcMur-Glu-dNH2Pim_ligase"/>
</dbReference>
<dbReference type="NCBIfam" id="TIGR01085">
    <property type="entry name" value="murE"/>
    <property type="match status" value="1"/>
</dbReference>
<dbReference type="NCBIfam" id="NF001126">
    <property type="entry name" value="PRK00139.1-4"/>
    <property type="match status" value="1"/>
</dbReference>
<dbReference type="PANTHER" id="PTHR23135">
    <property type="entry name" value="MUR LIGASE FAMILY MEMBER"/>
    <property type="match status" value="1"/>
</dbReference>
<dbReference type="PANTHER" id="PTHR23135:SF4">
    <property type="entry name" value="UDP-N-ACETYLMURAMOYL-L-ALANYL-D-GLUTAMATE--2,6-DIAMINOPIMELATE LIGASE MURE HOMOLOG, CHLOROPLASTIC"/>
    <property type="match status" value="1"/>
</dbReference>
<dbReference type="Pfam" id="PF02875">
    <property type="entry name" value="Mur_ligase_C"/>
    <property type="match status" value="1"/>
</dbReference>
<dbReference type="Pfam" id="PF08245">
    <property type="entry name" value="Mur_ligase_M"/>
    <property type="match status" value="1"/>
</dbReference>
<dbReference type="SUPFAM" id="SSF53623">
    <property type="entry name" value="MurD-like peptide ligases, catalytic domain"/>
    <property type="match status" value="1"/>
</dbReference>
<dbReference type="SUPFAM" id="SSF53244">
    <property type="entry name" value="MurD-like peptide ligases, peptide-binding domain"/>
    <property type="match status" value="1"/>
</dbReference>
<dbReference type="SUPFAM" id="SSF63418">
    <property type="entry name" value="MurE/MurF N-terminal domain"/>
    <property type="match status" value="1"/>
</dbReference>
<organism>
    <name type="scientific">Ralstonia nicotianae (strain ATCC BAA-1114 / GMI1000)</name>
    <name type="common">Ralstonia solanacearum</name>
    <dbReference type="NCBI Taxonomy" id="267608"/>
    <lineage>
        <taxon>Bacteria</taxon>
        <taxon>Pseudomonadati</taxon>
        <taxon>Pseudomonadota</taxon>
        <taxon>Betaproteobacteria</taxon>
        <taxon>Burkholderiales</taxon>
        <taxon>Burkholderiaceae</taxon>
        <taxon>Ralstonia</taxon>
        <taxon>Ralstonia solanacearum species complex</taxon>
    </lineage>
</organism>
<evidence type="ECO:0000255" key="1">
    <source>
        <dbReference type="HAMAP-Rule" id="MF_00208"/>
    </source>
</evidence>
<keyword id="KW-0067">ATP-binding</keyword>
<keyword id="KW-0131">Cell cycle</keyword>
<keyword id="KW-0132">Cell division</keyword>
<keyword id="KW-0133">Cell shape</keyword>
<keyword id="KW-0961">Cell wall biogenesis/degradation</keyword>
<keyword id="KW-0963">Cytoplasm</keyword>
<keyword id="KW-0436">Ligase</keyword>
<keyword id="KW-0460">Magnesium</keyword>
<keyword id="KW-0547">Nucleotide-binding</keyword>
<keyword id="KW-0573">Peptidoglycan synthesis</keyword>
<keyword id="KW-1185">Reference proteome</keyword>
<sequence>MTAVPTSERAPIAARLAPVLDWLRAHVPAGADLTSDTRKLKTGDVFVAYVLGNVRQRGDGRPHIPQAIEAGVSAVLAEAHGYVVPADAPARILPVDGLSELAGPLAAQWYAVPGPDALRVIGVTGTNGKTSCSQWIAQALSRQGERCAVVGTLGTGFVDALVATGFTTPDAIQLQHSLADLHRAGARAVAMEVSSHGLEQGRADGTRFDIALFTNLTQDHLDYHGTMAEYELAKARLFGWPGLRAAVINRDDAAGGRLLAGLRAGIEAVEYGIDGEAAAQRGAGHWLRATNVRAHRTGTTFDVDGSFGRATVHSPMVGLFNVSNQLGVLGVLLMAGVPWQDALARLEKLQPVSGRMERFGGEDGPLVVVDYAHTPDALEQTLRALAPITGARGGKLWAVFGCGGDRDPGKRPQMGAIAERLAQHVVLTSDNPRSEDPQLILDMIADGMEDPRLAIQIEDRAAAILHAVRHADVHDVIVVAGKGHESTQEIAGRKRPFSDQEHVRLALAARGVNA</sequence>
<accession>Q8XVI2</accession>
<gene>
    <name evidence="1" type="primary">murE</name>
    <name type="ordered locus">RSc2849</name>
    <name type="ORF">RS00256</name>
</gene>
<protein>
    <recommendedName>
        <fullName evidence="1">UDP-N-acetylmuramoyl-L-alanyl-D-glutamate--2,6-diaminopimelate ligase</fullName>
        <ecNumber evidence="1">6.3.2.13</ecNumber>
    </recommendedName>
    <alternativeName>
        <fullName evidence="1">Meso-A2pm-adding enzyme</fullName>
    </alternativeName>
    <alternativeName>
        <fullName evidence="1">Meso-diaminopimelate-adding enzyme</fullName>
    </alternativeName>
    <alternativeName>
        <fullName evidence="1">UDP-MurNAc-L-Ala-D-Glu:meso-diaminopimelate ligase</fullName>
    </alternativeName>
    <alternativeName>
        <fullName evidence="1">UDP-MurNAc-tripeptide synthetase</fullName>
    </alternativeName>
    <alternativeName>
        <fullName evidence="1">UDP-N-acetylmuramyl-tripeptide synthetase</fullName>
    </alternativeName>
</protein>